<evidence type="ECO:0000255" key="1">
    <source>
        <dbReference type="HAMAP-Rule" id="MF_01600"/>
    </source>
</evidence>
<organism>
    <name type="scientific">Clostridium botulinum (strain Okra / Type B1)</name>
    <dbReference type="NCBI Taxonomy" id="498213"/>
    <lineage>
        <taxon>Bacteria</taxon>
        <taxon>Bacillati</taxon>
        <taxon>Bacillota</taxon>
        <taxon>Clostridia</taxon>
        <taxon>Eubacteriales</taxon>
        <taxon>Clostridiaceae</taxon>
        <taxon>Clostridium</taxon>
    </lineage>
</organism>
<feature type="chain" id="PRO_0000335544" description="UPF0182 protein CLD_0809">
    <location>
        <begin position="1"/>
        <end position="893"/>
    </location>
</feature>
<feature type="transmembrane region" description="Helical" evidence="1">
    <location>
        <begin position="9"/>
        <end position="29"/>
    </location>
</feature>
<feature type="transmembrane region" description="Helical" evidence="1">
    <location>
        <begin position="49"/>
        <end position="69"/>
    </location>
</feature>
<feature type="transmembrane region" description="Helical" evidence="1">
    <location>
        <begin position="94"/>
        <end position="114"/>
    </location>
</feature>
<feature type="transmembrane region" description="Helical" evidence="1">
    <location>
        <begin position="154"/>
        <end position="174"/>
    </location>
</feature>
<feature type="transmembrane region" description="Helical" evidence="1">
    <location>
        <begin position="202"/>
        <end position="222"/>
    </location>
</feature>
<feature type="transmembrane region" description="Helical" evidence="1">
    <location>
        <begin position="246"/>
        <end position="266"/>
    </location>
</feature>
<feature type="transmembrane region" description="Helical" evidence="1">
    <location>
        <begin position="273"/>
        <end position="293"/>
    </location>
</feature>
<name>Y809_CLOBK</name>
<accession>B1IDY6</accession>
<comment type="subcellular location">
    <subcellularLocation>
        <location evidence="1">Cell membrane</location>
        <topology evidence="1">Multi-pass membrane protein</topology>
    </subcellularLocation>
</comment>
<comment type="similarity">
    <text evidence="1">Belongs to the UPF0182 family.</text>
</comment>
<gene>
    <name type="ordered locus">CLD_0809</name>
</gene>
<proteinExistence type="inferred from homology"/>
<dbReference type="EMBL" id="CP000939">
    <property type="protein sequence ID" value="ACA45178.1"/>
    <property type="molecule type" value="Genomic_DNA"/>
</dbReference>
<dbReference type="RefSeq" id="WP_003400087.1">
    <property type="nucleotide sequence ID" value="NC_010516.1"/>
</dbReference>
<dbReference type="SMR" id="B1IDY6"/>
<dbReference type="KEGG" id="cbb:CLD_0809"/>
<dbReference type="HOGENOM" id="CLU_007733_0_0_9"/>
<dbReference type="Proteomes" id="UP000008541">
    <property type="component" value="Chromosome"/>
</dbReference>
<dbReference type="GO" id="GO:0005576">
    <property type="term" value="C:extracellular region"/>
    <property type="evidence" value="ECO:0007669"/>
    <property type="project" value="TreeGrafter"/>
</dbReference>
<dbReference type="GO" id="GO:0005886">
    <property type="term" value="C:plasma membrane"/>
    <property type="evidence" value="ECO:0007669"/>
    <property type="project" value="UniProtKB-SubCell"/>
</dbReference>
<dbReference type="HAMAP" id="MF_01600">
    <property type="entry name" value="UPF0182"/>
    <property type="match status" value="1"/>
</dbReference>
<dbReference type="InterPro" id="IPR005372">
    <property type="entry name" value="UPF0182"/>
</dbReference>
<dbReference type="NCBIfam" id="NF000825">
    <property type="entry name" value="PRK00068.1"/>
    <property type="match status" value="1"/>
</dbReference>
<dbReference type="PANTHER" id="PTHR39344">
    <property type="entry name" value="UPF0182 PROTEIN SLL1060"/>
    <property type="match status" value="1"/>
</dbReference>
<dbReference type="PANTHER" id="PTHR39344:SF1">
    <property type="entry name" value="UPF0182 PROTEIN SLL1060"/>
    <property type="match status" value="1"/>
</dbReference>
<dbReference type="Pfam" id="PF03699">
    <property type="entry name" value="UPF0182"/>
    <property type="match status" value="1"/>
</dbReference>
<keyword id="KW-1003">Cell membrane</keyword>
<keyword id="KW-0472">Membrane</keyword>
<keyword id="KW-0812">Transmembrane</keyword>
<keyword id="KW-1133">Transmembrane helix</keyword>
<protein>
    <recommendedName>
        <fullName evidence="1">UPF0182 protein CLD_0809</fullName>
    </recommendedName>
</protein>
<reference key="1">
    <citation type="journal article" date="2007" name="PLoS ONE">
        <title>Analysis of the neurotoxin complex genes in Clostridium botulinum A1-A4 and B1 strains: BoNT/A3, /Ba4 and /B1 clusters are located within plasmids.</title>
        <authorList>
            <person name="Smith T.J."/>
            <person name="Hill K.K."/>
            <person name="Foley B.T."/>
            <person name="Detter J.C."/>
            <person name="Munk A.C."/>
            <person name="Bruce D.C."/>
            <person name="Doggett N.A."/>
            <person name="Smith L.A."/>
            <person name="Marks J.D."/>
            <person name="Xie G."/>
            <person name="Brettin T.S."/>
        </authorList>
    </citation>
    <scope>NUCLEOTIDE SEQUENCE [LARGE SCALE GENOMIC DNA]</scope>
    <source>
        <strain>Okra / Type B1</strain>
    </source>
</reference>
<sequence length="893" mass="104116">MKNKKALFIPLFIIILFIAFFNKIINFIINIKWFKEVNYLAVYFTKMRAIIILMIPIFIIFFISIWMYYKSLIINKNKSVVDIGLNKNNYGKKLFFIFNFIVSIFLAYIFSSSYWYRILQFNNSVDFNVKDPIFFKDVSFYIFKLPLFESLYKVIISLLLFLVITTFIAYFILEAKYKIQSRKDINLKNINYGIKSFAGKQLAIVSGLIILFISFGHLIKIWNLVYSSNGVSFGASYTDVHATLLFYKIIVVITLISSIVTLLSIVKGKFKPVSICIGITIFLIVSQNIASFLVQNFIVKSNEKTLEQPYIKNNIDLTRKAFALDDIEIRDFDIKNDLQKQDIADNKASIDNIRINSFKPTLEFYNQVQIIRYYYTFNDIDIDRYNINGKYNQVFLAAREIDTDALNPNTWQNRHLIYTHGFGAVMNKVNSVTSEGQPDFVIKDIPPYNKTNIKLTNPRIYFGEKTNDYVIVNTKINEFDYPREDSNKTNKYNGHAGIKMSFINRLLFAINKKDINFLLSKDIKKDSKIIINRNIVERAKKIAPFLTYDSDPYMVIYNGKIYWIIDAYTTTNRYPYSEPYDSINYIRNSAKVVIDSVDGDTNFYITDKKDPIVNNYAKTFKGLFKEEEDAPKEIREHFRYPKDLFSIQSKVLGKYHVKDPGVFYNGEDLWEVSKDQKHVEGETNTNDAPYIIMKLPDQNKEEMVLLNYFNVMKKDNMIALFGARMDGEQYGKKILYKLPSDKTVYSPYLFKQKINQDTNISKELSLWNREGSKVQYGDTIILPIKNSLLYIEPLYLRASGKNSIPEMKRVILSYNDKLVLSSSIQEGIKEIFNSKDNKINDKNEKDSTKTIDDSKLKKAQEYYNKAIEAQKNGDWTKYGENINELGNILNSIK</sequence>